<accession>A0A8I5ZM56</accession>
<accession>A0A8I5Y1Q7</accession>
<keyword id="KW-0025">Alternative splicing</keyword>
<keyword id="KW-0175">Coiled coil</keyword>
<keyword id="KW-0963">Cytoplasm</keyword>
<keyword id="KW-0206">Cytoskeleton</keyword>
<keyword id="KW-1017">Isopeptide bond</keyword>
<keyword id="KW-0597">Phosphoprotein</keyword>
<keyword id="KW-1185">Reference proteome</keyword>
<keyword id="KW-0832">Ubl conjugation</keyword>
<comment type="function">
    <text evidence="1">Microtubule-stabilizing protein involved in the control of cell motility and neurite outgrowth. Facilitate microtubule stabilization through the maintenance of acetylated stable microtubules.</text>
</comment>
<comment type="subcellular location">
    <subcellularLocation>
        <location evidence="2">Cytoplasm</location>
        <location evidence="2">Cytoskeleton</location>
        <location evidence="2">Spindle</location>
    </subcellularLocation>
    <subcellularLocation>
        <location evidence="1">Cytoplasm</location>
        <location evidence="1">Cytoskeleton</location>
    </subcellularLocation>
    <subcellularLocation>
        <location evidence="1">Cytoplasm</location>
        <location evidence="1">Cytoskeleton</location>
        <location evidence="1">Microtubule organizing center</location>
        <location evidence="1">Centrosome</location>
    </subcellularLocation>
    <subcellularLocation>
        <location evidence="1">Midbody</location>
    </subcellularLocation>
</comment>
<comment type="alternative products">
    <event type="alternative splicing"/>
    <isoform>
        <id>A0A8I5ZM56-1</id>
        <name>1</name>
        <sequence type="displayed"/>
    </isoform>
    <isoform>
        <id>A0A8I5ZM56-2</id>
        <name>2</name>
        <sequence type="described" ref="VSP_062529"/>
    </isoform>
</comment>
<comment type="similarity">
    <text evidence="5">Belongs to the MAP7 family.</text>
</comment>
<feature type="chain" id="PRO_0000462089" description="MAP7 domain-containing protein 1">
    <location>
        <begin position="1"/>
        <end position="849"/>
    </location>
</feature>
<feature type="region of interest" description="Disordered" evidence="4">
    <location>
        <begin position="1"/>
        <end position="151"/>
    </location>
</feature>
<feature type="region of interest" description="Disordered" evidence="4">
    <location>
        <begin position="186"/>
        <end position="210"/>
    </location>
</feature>
<feature type="region of interest" description="Disordered" evidence="4">
    <location>
        <begin position="318"/>
        <end position="815"/>
    </location>
</feature>
<feature type="coiled-coil region" evidence="3">
    <location>
        <begin position="167"/>
        <end position="223"/>
    </location>
</feature>
<feature type="coiled-coil region" evidence="3">
    <location>
        <begin position="602"/>
        <end position="724"/>
    </location>
</feature>
<feature type="compositionally biased region" description="Pro residues" evidence="4">
    <location>
        <begin position="24"/>
        <end position="41"/>
    </location>
</feature>
<feature type="compositionally biased region" description="Basic and acidic residues" evidence="4">
    <location>
        <begin position="132"/>
        <end position="151"/>
    </location>
</feature>
<feature type="compositionally biased region" description="Basic and acidic residues" evidence="4">
    <location>
        <begin position="407"/>
        <end position="437"/>
    </location>
</feature>
<feature type="compositionally biased region" description="Polar residues" evidence="4">
    <location>
        <begin position="457"/>
        <end position="474"/>
    </location>
</feature>
<feature type="compositionally biased region" description="Pro residues" evidence="4">
    <location>
        <begin position="479"/>
        <end position="497"/>
    </location>
</feature>
<feature type="compositionally biased region" description="Basic and acidic residues" evidence="4">
    <location>
        <begin position="523"/>
        <end position="539"/>
    </location>
</feature>
<feature type="compositionally biased region" description="Pro residues" evidence="4">
    <location>
        <begin position="542"/>
        <end position="556"/>
    </location>
</feature>
<feature type="compositionally biased region" description="Low complexity" evidence="4">
    <location>
        <begin position="568"/>
        <end position="582"/>
    </location>
</feature>
<feature type="compositionally biased region" description="Basic and acidic residues" evidence="4">
    <location>
        <begin position="603"/>
        <end position="743"/>
    </location>
</feature>
<feature type="modified residue" description="Phosphothreonine" evidence="2">
    <location>
        <position position="49"/>
    </location>
</feature>
<feature type="modified residue" description="Phosphothreonine" evidence="2">
    <location>
        <position position="53"/>
    </location>
</feature>
<feature type="modified residue" description="Phosphoserine" evidence="2">
    <location>
        <position position="72"/>
    </location>
</feature>
<feature type="modified residue" description="Phosphoserine" evidence="2">
    <location>
        <position position="95"/>
    </location>
</feature>
<feature type="modified residue" description="Phosphothreonine" evidence="2">
    <location>
        <position position="99"/>
    </location>
</feature>
<feature type="modified residue" description="Phosphoserine" evidence="2">
    <location>
        <position position="115"/>
    </location>
</feature>
<feature type="modified residue" description="Phosphoserine" evidence="2">
    <location>
        <position position="118"/>
    </location>
</feature>
<feature type="modified residue" description="Phosphothreonine" evidence="2">
    <location>
        <position position="120"/>
    </location>
</feature>
<feature type="modified residue" description="Phosphoserine" evidence="2">
    <location>
        <position position="125"/>
    </location>
</feature>
<feature type="modified residue" description="Phosphoserine" evidence="2">
    <location>
        <position position="127"/>
    </location>
</feature>
<feature type="modified residue" description="Phosphoserine" evidence="2">
    <location>
        <position position="256"/>
    </location>
</feature>
<feature type="modified residue" description="Phosphoserine" evidence="2">
    <location>
        <position position="275"/>
    </location>
</feature>
<feature type="modified residue" description="Phosphoserine" evidence="2">
    <location>
        <position position="315"/>
    </location>
</feature>
<feature type="modified residue" description="Phosphoserine" evidence="2">
    <location>
        <position position="368"/>
    </location>
</feature>
<feature type="modified residue" description="Phosphoserine" evidence="2">
    <location>
        <position position="401"/>
    </location>
</feature>
<feature type="modified residue" description="Phosphoserine" evidence="2">
    <location>
        <position position="444"/>
    </location>
</feature>
<feature type="modified residue" description="Phosphoserine" evidence="2">
    <location>
        <position position="448"/>
    </location>
</feature>
<feature type="modified residue" description="Phosphoserine" evidence="2">
    <location>
        <position position="454"/>
    </location>
</feature>
<feature type="modified residue" description="Phosphoserine" evidence="2">
    <location>
        <position position="460"/>
    </location>
</feature>
<feature type="modified residue" description="Phosphoserine" evidence="1">
    <location>
        <position position="479"/>
    </location>
</feature>
<feature type="modified residue" description="Phosphoserine" evidence="1">
    <location>
        <position position="496"/>
    </location>
</feature>
<feature type="modified residue" description="Phosphoserine" evidence="2">
    <location>
        <position position="544"/>
    </location>
</feature>
<feature type="modified residue" description="Phosphoserine" evidence="2">
    <location>
        <position position="548"/>
    </location>
</feature>
<feature type="modified residue" description="Phosphoserine" evidence="2">
    <location>
        <position position="552"/>
    </location>
</feature>
<feature type="modified residue" description="Phosphothreonine" evidence="2">
    <location>
        <position position="554"/>
    </location>
</feature>
<feature type="cross-link" description="Glycyl lysine isopeptide (Lys-Gly) (interchain with G-Cter in SUMO2)" evidence="2">
    <location>
        <position position="462"/>
    </location>
</feature>
<feature type="splice variant" id="VSP_062529" description="In isoform 2.">
    <location>
        <begin position="249"/>
        <end position="285"/>
    </location>
</feature>
<protein>
    <recommendedName>
        <fullName>MAP7 domain-containing protein 1</fullName>
    </recommendedName>
</protein>
<reference key="1">
    <citation type="journal article" date="2004" name="Nature">
        <title>Genome sequence of the Brown Norway rat yields insights into mammalian evolution.</title>
        <authorList>
            <person name="Gibbs R.A."/>
            <person name="Weinstock G.M."/>
            <person name="Metzker M.L."/>
            <person name="Muzny D.M."/>
            <person name="Sodergren E.J."/>
            <person name="Scherer S."/>
            <person name="Scott G."/>
            <person name="Steffen D."/>
            <person name="Worley K.C."/>
            <person name="Burch P.E."/>
            <person name="Okwuonu G."/>
            <person name="Hines S."/>
            <person name="Lewis L."/>
            <person name="Deramo C."/>
            <person name="Delgado O."/>
            <person name="Dugan-Rocha S."/>
            <person name="Miner G."/>
            <person name="Morgan M."/>
            <person name="Hawes A."/>
            <person name="Gill R."/>
            <person name="Holt R.A."/>
            <person name="Adams M.D."/>
            <person name="Amanatides P.G."/>
            <person name="Baden-Tillson H."/>
            <person name="Barnstead M."/>
            <person name="Chin S."/>
            <person name="Evans C.A."/>
            <person name="Ferriera S."/>
            <person name="Fosler C."/>
            <person name="Glodek A."/>
            <person name="Gu Z."/>
            <person name="Jennings D."/>
            <person name="Kraft C.L."/>
            <person name="Nguyen T."/>
            <person name="Pfannkoch C.M."/>
            <person name="Sitter C."/>
            <person name="Sutton G.G."/>
            <person name="Venter J.C."/>
            <person name="Woodage T."/>
            <person name="Smith D."/>
            <person name="Lee H.-M."/>
            <person name="Gustafson E."/>
            <person name="Cahill P."/>
            <person name="Kana A."/>
            <person name="Doucette-Stamm L."/>
            <person name="Weinstock K."/>
            <person name="Fechtel K."/>
            <person name="Weiss R.B."/>
            <person name="Dunn D.M."/>
            <person name="Green E.D."/>
            <person name="Blakesley R.W."/>
            <person name="Bouffard G.G."/>
            <person name="De Jong P.J."/>
            <person name="Osoegawa K."/>
            <person name="Zhu B."/>
            <person name="Marra M."/>
            <person name="Schein J."/>
            <person name="Bosdet I."/>
            <person name="Fjell C."/>
            <person name="Jones S."/>
            <person name="Krzywinski M."/>
            <person name="Mathewson C."/>
            <person name="Siddiqui A."/>
            <person name="Wye N."/>
            <person name="McPherson J."/>
            <person name="Zhao S."/>
            <person name="Fraser C.M."/>
            <person name="Shetty J."/>
            <person name="Shatsman S."/>
            <person name="Geer K."/>
            <person name="Chen Y."/>
            <person name="Abramzon S."/>
            <person name="Nierman W.C."/>
            <person name="Havlak P.H."/>
            <person name="Chen R."/>
            <person name="Durbin K.J."/>
            <person name="Egan A."/>
            <person name="Ren Y."/>
            <person name="Song X.-Z."/>
            <person name="Li B."/>
            <person name="Liu Y."/>
            <person name="Qin X."/>
            <person name="Cawley S."/>
            <person name="Cooney A.J."/>
            <person name="D'Souza L.M."/>
            <person name="Martin K."/>
            <person name="Wu J.Q."/>
            <person name="Gonzalez-Garay M.L."/>
            <person name="Jackson A.R."/>
            <person name="Kalafus K.J."/>
            <person name="McLeod M.P."/>
            <person name="Milosavljevic A."/>
            <person name="Virk D."/>
            <person name="Volkov A."/>
            <person name="Wheeler D.A."/>
            <person name="Zhang Z."/>
            <person name="Bailey J.A."/>
            <person name="Eichler E.E."/>
            <person name="Tuzun E."/>
            <person name="Birney E."/>
            <person name="Mongin E."/>
            <person name="Ureta-Vidal A."/>
            <person name="Woodwark C."/>
            <person name="Zdobnov E."/>
            <person name="Bork P."/>
            <person name="Suyama M."/>
            <person name="Torrents D."/>
            <person name="Alexandersson M."/>
            <person name="Trask B.J."/>
            <person name="Young J.M."/>
            <person name="Huang H."/>
            <person name="Wang H."/>
            <person name="Xing H."/>
            <person name="Daniels S."/>
            <person name="Gietzen D."/>
            <person name="Schmidt J."/>
            <person name="Stevens K."/>
            <person name="Vitt U."/>
            <person name="Wingrove J."/>
            <person name="Camara F."/>
            <person name="Mar Alba M."/>
            <person name="Abril J.F."/>
            <person name="Guigo R."/>
            <person name="Smit A."/>
            <person name="Dubchak I."/>
            <person name="Rubin E.M."/>
            <person name="Couronne O."/>
            <person name="Poliakov A."/>
            <person name="Huebner N."/>
            <person name="Ganten D."/>
            <person name="Goesele C."/>
            <person name="Hummel O."/>
            <person name="Kreitler T."/>
            <person name="Lee Y.-A."/>
            <person name="Monti J."/>
            <person name="Schulz H."/>
            <person name="Zimdahl H."/>
            <person name="Himmelbauer H."/>
            <person name="Lehrach H."/>
            <person name="Jacob H.J."/>
            <person name="Bromberg S."/>
            <person name="Gullings-Handley J."/>
            <person name="Jensen-Seaman M.I."/>
            <person name="Kwitek A.E."/>
            <person name="Lazar J."/>
            <person name="Pasko D."/>
            <person name="Tonellato P.J."/>
            <person name="Twigger S."/>
            <person name="Ponting C.P."/>
            <person name="Duarte J.M."/>
            <person name="Rice S."/>
            <person name="Goodstadt L."/>
            <person name="Beatson S.A."/>
            <person name="Emes R.D."/>
            <person name="Winter E.E."/>
            <person name="Webber C."/>
            <person name="Brandt P."/>
            <person name="Nyakatura G."/>
            <person name="Adetobi M."/>
            <person name="Chiaromonte F."/>
            <person name="Elnitski L."/>
            <person name="Eswara P."/>
            <person name="Hardison R.C."/>
            <person name="Hou M."/>
            <person name="Kolbe D."/>
            <person name="Makova K."/>
            <person name="Miller W."/>
            <person name="Nekrutenko A."/>
            <person name="Riemer C."/>
            <person name="Schwartz S."/>
            <person name="Taylor J."/>
            <person name="Yang S."/>
            <person name="Zhang Y."/>
            <person name="Lindpaintner K."/>
            <person name="Andrews T.D."/>
            <person name="Caccamo M."/>
            <person name="Clamp M."/>
            <person name="Clarke L."/>
            <person name="Curwen V."/>
            <person name="Durbin R.M."/>
            <person name="Eyras E."/>
            <person name="Searle S.M."/>
            <person name="Cooper G.M."/>
            <person name="Batzoglou S."/>
            <person name="Brudno M."/>
            <person name="Sidow A."/>
            <person name="Stone E.A."/>
            <person name="Payseur B.A."/>
            <person name="Bourque G."/>
            <person name="Lopez-Otin C."/>
            <person name="Puente X.S."/>
            <person name="Chakrabarti K."/>
            <person name="Chatterji S."/>
            <person name="Dewey C."/>
            <person name="Pachter L."/>
            <person name="Bray N."/>
            <person name="Yap V.B."/>
            <person name="Caspi A."/>
            <person name="Tesler G."/>
            <person name="Pevzner P.A."/>
            <person name="Haussler D."/>
            <person name="Roskin K.M."/>
            <person name="Baertsch R."/>
            <person name="Clawson H."/>
            <person name="Furey T.S."/>
            <person name="Hinrichs A.S."/>
            <person name="Karolchik D."/>
            <person name="Kent W.J."/>
            <person name="Rosenbloom K.R."/>
            <person name="Trumbower H."/>
            <person name="Weirauch M."/>
            <person name="Cooper D.N."/>
            <person name="Stenson P.D."/>
            <person name="Ma B."/>
            <person name="Brent M."/>
            <person name="Arumugam M."/>
            <person name="Shteynberg D."/>
            <person name="Copley R.R."/>
            <person name="Taylor M.S."/>
            <person name="Riethman H."/>
            <person name="Mudunuri U."/>
            <person name="Peterson J."/>
            <person name="Guyer M."/>
            <person name="Felsenfeld A."/>
            <person name="Old S."/>
            <person name="Mockrin S."/>
            <person name="Collins F.S."/>
        </authorList>
    </citation>
    <scope>NUCLEOTIDE SEQUENCE [LARGE SCALE GENOMIC DNA]</scope>
    <source>
        <strain>Brown Norway</strain>
    </source>
</reference>
<name>MA7D1_RAT</name>
<gene>
    <name type="primary">Map7d1</name>
    <name type="synonym">Mtap7d1</name>
</gene>
<evidence type="ECO:0000250" key="1">
    <source>
        <dbReference type="UniProtKB" id="A2AJI0"/>
    </source>
</evidence>
<evidence type="ECO:0000250" key="2">
    <source>
        <dbReference type="UniProtKB" id="Q3KQU3"/>
    </source>
</evidence>
<evidence type="ECO:0000255" key="3"/>
<evidence type="ECO:0000256" key="4">
    <source>
        <dbReference type="SAM" id="MobiDB-lite"/>
    </source>
</evidence>
<evidence type="ECO:0000305" key="5"/>
<proteinExistence type="inferred from homology"/>
<organism>
    <name type="scientific">Rattus norvegicus</name>
    <name type="common">Rat</name>
    <dbReference type="NCBI Taxonomy" id="10116"/>
    <lineage>
        <taxon>Eukaryota</taxon>
        <taxon>Metazoa</taxon>
        <taxon>Chordata</taxon>
        <taxon>Craniata</taxon>
        <taxon>Vertebrata</taxon>
        <taxon>Euteleostomi</taxon>
        <taxon>Mammalia</taxon>
        <taxon>Eutheria</taxon>
        <taxon>Euarchontoglires</taxon>
        <taxon>Glires</taxon>
        <taxon>Rodentia</taxon>
        <taxon>Myomorpha</taxon>
        <taxon>Muroidea</taxon>
        <taxon>Muridae</taxon>
        <taxon>Murinae</taxon>
        <taxon>Rattus</taxon>
    </lineage>
</organism>
<dbReference type="EMBL" id="AABR07073158">
    <property type="status" value="NOT_ANNOTATED_CDS"/>
    <property type="molecule type" value="Genomic_DNA"/>
</dbReference>
<dbReference type="EMBL" id="AC125765">
    <property type="status" value="NOT_ANNOTATED_CDS"/>
    <property type="molecule type" value="Genomic_DNA"/>
</dbReference>
<dbReference type="RefSeq" id="XP_006238963.1">
    <molecule id="A0A8I5ZM56-1"/>
    <property type="nucleotide sequence ID" value="XM_006238901.5"/>
</dbReference>
<dbReference type="RefSeq" id="XP_006238965.1">
    <molecule id="A0A8I5ZM56-2"/>
    <property type="nucleotide sequence ID" value="XM_006238903.5"/>
</dbReference>
<dbReference type="FunCoup" id="A0A8I5ZM56">
    <property type="interactions" value="699"/>
</dbReference>
<dbReference type="GlyGen" id="A0A8I5ZM56">
    <property type="glycosylation" value="4 sites"/>
</dbReference>
<dbReference type="Ensembl" id="ENSRNOT00000108369.1">
    <molecule id="A0A8I5ZM56-2"/>
    <property type="protein sequence ID" value="ENSRNOP00000077561.1"/>
    <property type="gene ID" value="ENSRNOG00000010237.7"/>
</dbReference>
<dbReference type="Ensembl" id="ENSRNOT00000115338.1">
    <molecule id="A0A8I5ZM56-1"/>
    <property type="protein sequence ID" value="ENSRNOP00000078898.1"/>
    <property type="gene ID" value="ENSRNOG00000010237.7"/>
</dbReference>
<dbReference type="GeneID" id="681287"/>
<dbReference type="AGR" id="RGD:1597986"/>
<dbReference type="CTD" id="55700"/>
<dbReference type="RGD" id="1597986">
    <property type="gene designation" value="Map7d1"/>
</dbReference>
<dbReference type="GeneTree" id="ENSGT00950000182941"/>
<dbReference type="OMA" id="MERSCAG"/>
<dbReference type="Proteomes" id="UP000002494">
    <property type="component" value="Chromosome 5"/>
</dbReference>
<dbReference type="GO" id="GO:0005813">
    <property type="term" value="C:centrosome"/>
    <property type="evidence" value="ECO:0000250"/>
    <property type="project" value="UniProtKB"/>
</dbReference>
<dbReference type="GO" id="GO:0015630">
    <property type="term" value="C:microtubule cytoskeleton"/>
    <property type="evidence" value="ECO:0000318"/>
    <property type="project" value="GO_Central"/>
</dbReference>
<dbReference type="GO" id="GO:0030496">
    <property type="term" value="C:midbody"/>
    <property type="evidence" value="ECO:0007669"/>
    <property type="project" value="UniProtKB-SubCell"/>
</dbReference>
<dbReference type="GO" id="GO:0005819">
    <property type="term" value="C:spindle"/>
    <property type="evidence" value="ECO:0000266"/>
    <property type="project" value="RGD"/>
</dbReference>
<dbReference type="GO" id="GO:0000226">
    <property type="term" value="P:microtubule cytoskeleton organization"/>
    <property type="evidence" value="ECO:0000318"/>
    <property type="project" value="GO_Central"/>
</dbReference>
<dbReference type="InterPro" id="IPR051483">
    <property type="entry name" value="MAP7_domain-containing"/>
</dbReference>
<dbReference type="InterPro" id="IPR008604">
    <property type="entry name" value="MAP7_fam"/>
</dbReference>
<dbReference type="PANTHER" id="PTHR15073:SF2">
    <property type="entry name" value="MAP7 DOMAIN-CONTAINING PROTEIN 1"/>
    <property type="match status" value="1"/>
</dbReference>
<dbReference type="PANTHER" id="PTHR15073">
    <property type="entry name" value="MICROTUBULE-ASSOCIATED PROTEIN"/>
    <property type="match status" value="1"/>
</dbReference>
<dbReference type="Pfam" id="PF05672">
    <property type="entry name" value="MAP7"/>
    <property type="match status" value="1"/>
</dbReference>
<dbReference type="PRINTS" id="PR01217">
    <property type="entry name" value="PRICHEXTENSN"/>
</dbReference>
<sequence length="849" mass="93602">MESGPRVEPGPGAPAAVLARIPQEPRPSPEGDPSPPPPPTPMSALVPDTPPDTPPAMKNASTPQQLPLEPVSPTGQVSPQPAPPPDECPSSEAKSRGPTPTATGPRDAKPSQRSSQPSPTAVPASDSPSAKQDVKKAGERHKLAKERREERAKYLAAKKAVWLEKEEKAKALREKQLQERRRRLEEQRLKAEQRRAALEERQRQKLEKNKERYEAAIQRSVKKTWAEIRQQRWSWAGALHHNSPGRKTSGSRCSVSAVNLPKHVDSIINKRLSKSSATLWNSPSRNRSLQLSAWESSIVDRLMTPTLSFLARSRSAVTLPRNGRDQGRGSGPGRRPTRARAGASLAPGPHPDRTHPSAAVPVCPRSASASPLTPCSAPRSAHRCTPSGERPERRKPGAGGSPALVRRRLEATPVQKKEKKDKERENEKEKSALARERNLKKRQSLPASIRPRISTGAELSTKSKARPTSPSTTWHRPASPCPSPGPGHTLPPKPPSPRGTTASPKGRIRRKEEAKESPSPSGPEDKNHSKSRTAEEKEPAAPASPAPSPVPSPTPAQPQKEQSSTQIPPDTAVPAVPTVPTFPTAPPTAAPSVTPSKPMAGTTDREEATRLLAEKRRQAREQREREEQERKLQAERDKRMREEQLAREAEARAEREAEARRREEQEAREKAQAEQEEQERLQKQKEEAEARSREEAERQRLEREKHFQKEEQERQERRKRLEEIMKRTRKSEAAETKKQDGKETMANNSGPDPVKAVETRPSGLQKDSMQKEELAPQEPQWSLPSKEMPGSLVNGLQPLPAHQENGFPAKGTAGDKSLGRAAEGLLPFAEADAFLKKAVVQPPQVTEVL</sequence>